<feature type="chain" id="PRO_0000123069" description="7-methyl-GTP pyrophosphatase">
    <location>
        <begin position="1"/>
        <end position="193"/>
    </location>
</feature>
<feature type="active site" description="Proton acceptor" evidence="1">
    <location>
        <position position="70"/>
    </location>
</feature>
<feature type="site" description="Important for substrate specificity" evidence="1">
    <location>
        <position position="14"/>
    </location>
</feature>
<feature type="site" description="Important for substrate specificity" evidence="1">
    <location>
        <position position="71"/>
    </location>
</feature>
<feature type="site" description="Important for substrate specificity" evidence="1">
    <location>
        <position position="155"/>
    </location>
</feature>
<accession>Q9KQH1</accession>
<name>NTPPB_VIBCH</name>
<dbReference type="EC" id="3.6.1.-" evidence="1"/>
<dbReference type="EMBL" id="AE003852">
    <property type="protein sequence ID" value="AAF95175.1"/>
    <property type="molecule type" value="Genomic_DNA"/>
</dbReference>
<dbReference type="PIR" id="F82126">
    <property type="entry name" value="F82126"/>
</dbReference>
<dbReference type="RefSeq" id="NP_231661.1">
    <property type="nucleotide sequence ID" value="NC_002505.1"/>
</dbReference>
<dbReference type="RefSeq" id="WP_001181921.1">
    <property type="nucleotide sequence ID" value="NC_002505.1"/>
</dbReference>
<dbReference type="SMR" id="Q9KQH1"/>
<dbReference type="STRING" id="243277.VC_2027"/>
<dbReference type="DNASU" id="2613406"/>
<dbReference type="EnsemblBacteria" id="AAF95175">
    <property type="protein sequence ID" value="AAF95175"/>
    <property type="gene ID" value="VC_2027"/>
</dbReference>
<dbReference type="KEGG" id="vch:VC_2027"/>
<dbReference type="PATRIC" id="fig|243277.26.peg.1937"/>
<dbReference type="eggNOG" id="COG0424">
    <property type="taxonomic scope" value="Bacteria"/>
</dbReference>
<dbReference type="HOGENOM" id="CLU_040416_1_0_6"/>
<dbReference type="Proteomes" id="UP000000584">
    <property type="component" value="Chromosome 1"/>
</dbReference>
<dbReference type="GO" id="GO:0005737">
    <property type="term" value="C:cytoplasm"/>
    <property type="evidence" value="ECO:0007669"/>
    <property type="project" value="UniProtKB-SubCell"/>
</dbReference>
<dbReference type="GO" id="GO:0047429">
    <property type="term" value="F:nucleoside triphosphate diphosphatase activity"/>
    <property type="evidence" value="ECO:0000318"/>
    <property type="project" value="GO_Central"/>
</dbReference>
<dbReference type="GO" id="GO:0009117">
    <property type="term" value="P:nucleotide metabolic process"/>
    <property type="evidence" value="ECO:0007669"/>
    <property type="project" value="UniProtKB-KW"/>
</dbReference>
<dbReference type="CDD" id="cd00555">
    <property type="entry name" value="Maf"/>
    <property type="match status" value="1"/>
</dbReference>
<dbReference type="FunFam" id="3.90.950.10:FF:000005">
    <property type="entry name" value="7-methyl-GTP pyrophosphatase"/>
    <property type="match status" value="1"/>
</dbReference>
<dbReference type="Gene3D" id="3.90.950.10">
    <property type="match status" value="1"/>
</dbReference>
<dbReference type="HAMAP" id="MF_00528">
    <property type="entry name" value="Maf"/>
    <property type="match status" value="1"/>
</dbReference>
<dbReference type="InterPro" id="IPR029001">
    <property type="entry name" value="ITPase-like_fam"/>
</dbReference>
<dbReference type="InterPro" id="IPR003697">
    <property type="entry name" value="Maf-like"/>
</dbReference>
<dbReference type="NCBIfam" id="TIGR00172">
    <property type="entry name" value="maf"/>
    <property type="match status" value="1"/>
</dbReference>
<dbReference type="PANTHER" id="PTHR43213:SF10">
    <property type="entry name" value="7-METHYL-GTP PYROPHOSPHATASE"/>
    <property type="match status" value="1"/>
</dbReference>
<dbReference type="PANTHER" id="PTHR43213">
    <property type="entry name" value="BIFUNCTIONAL DTTP/UTP PYROPHOSPHATASE/METHYLTRANSFERASE PROTEIN-RELATED"/>
    <property type="match status" value="1"/>
</dbReference>
<dbReference type="Pfam" id="PF02545">
    <property type="entry name" value="Maf"/>
    <property type="match status" value="1"/>
</dbReference>
<dbReference type="PIRSF" id="PIRSF006305">
    <property type="entry name" value="Maf"/>
    <property type="match status" value="1"/>
</dbReference>
<dbReference type="SUPFAM" id="SSF52972">
    <property type="entry name" value="ITPase-like"/>
    <property type="match status" value="1"/>
</dbReference>
<evidence type="ECO:0000255" key="1">
    <source>
        <dbReference type="HAMAP-Rule" id="MF_00528"/>
    </source>
</evidence>
<protein>
    <recommendedName>
        <fullName evidence="1">7-methyl-GTP pyrophosphatase</fullName>
        <shortName evidence="1">m(7)GTP pyrophosphatase</shortName>
        <ecNumber evidence="1">3.6.1.-</ecNumber>
    </recommendedName>
</protein>
<keyword id="KW-0963">Cytoplasm</keyword>
<keyword id="KW-0378">Hydrolase</keyword>
<keyword id="KW-0546">Nucleotide metabolism</keyword>
<keyword id="KW-1185">Reference proteome</keyword>
<comment type="function">
    <text evidence="1">Nucleoside triphosphate pyrophosphatase that hydrolyzes 7-methyl-GTP (m(7)GTP). May have a dual role in cell division arrest and in preventing the incorporation of modified nucleotides into cellular nucleic acids.</text>
</comment>
<comment type="catalytic activity">
    <reaction evidence="1">
        <text>N(7)-methyl-GTP + H2O = N(7)-methyl-GMP + diphosphate + H(+)</text>
        <dbReference type="Rhea" id="RHEA:58744"/>
        <dbReference type="ChEBI" id="CHEBI:15377"/>
        <dbReference type="ChEBI" id="CHEBI:15378"/>
        <dbReference type="ChEBI" id="CHEBI:33019"/>
        <dbReference type="ChEBI" id="CHEBI:58285"/>
        <dbReference type="ChEBI" id="CHEBI:87133"/>
    </reaction>
</comment>
<comment type="cofactor">
    <cofactor evidence="1">
        <name>a divalent metal cation</name>
        <dbReference type="ChEBI" id="CHEBI:60240"/>
    </cofactor>
</comment>
<comment type="subcellular location">
    <subcellularLocation>
        <location evidence="1">Cytoplasm</location>
    </subcellularLocation>
</comment>
<comment type="similarity">
    <text evidence="1">Belongs to the Maf family. YceF subfamily.</text>
</comment>
<reference key="1">
    <citation type="journal article" date="2000" name="Nature">
        <title>DNA sequence of both chromosomes of the cholera pathogen Vibrio cholerae.</title>
        <authorList>
            <person name="Heidelberg J.F."/>
            <person name="Eisen J.A."/>
            <person name="Nelson W.C."/>
            <person name="Clayton R.A."/>
            <person name="Gwinn M.L."/>
            <person name="Dodson R.J."/>
            <person name="Haft D.H."/>
            <person name="Hickey E.K."/>
            <person name="Peterson J.D."/>
            <person name="Umayam L.A."/>
            <person name="Gill S.R."/>
            <person name="Nelson K.E."/>
            <person name="Read T.D."/>
            <person name="Tettelin H."/>
            <person name="Richardson D.L."/>
            <person name="Ermolaeva M.D."/>
            <person name="Vamathevan J.J."/>
            <person name="Bass S."/>
            <person name="Qin H."/>
            <person name="Dragoi I."/>
            <person name="Sellers P."/>
            <person name="McDonald L.A."/>
            <person name="Utterback T.R."/>
            <person name="Fleischmann R.D."/>
            <person name="Nierman W.C."/>
            <person name="White O."/>
            <person name="Salzberg S.L."/>
            <person name="Smith H.O."/>
            <person name="Colwell R.R."/>
            <person name="Mekalanos J.J."/>
            <person name="Venter J.C."/>
            <person name="Fraser C.M."/>
        </authorList>
    </citation>
    <scope>NUCLEOTIDE SEQUENCE [LARGE SCALE GENOMIC DNA]</scope>
    <source>
        <strain>ATCC 39315 / El Tor Inaba N16961</strain>
    </source>
</reference>
<gene>
    <name type="ordered locus">VC_2027</name>
</gene>
<organism>
    <name type="scientific">Vibrio cholerae serotype O1 (strain ATCC 39315 / El Tor Inaba N16961)</name>
    <dbReference type="NCBI Taxonomy" id="243277"/>
    <lineage>
        <taxon>Bacteria</taxon>
        <taxon>Pseudomonadati</taxon>
        <taxon>Pseudomonadota</taxon>
        <taxon>Gammaproteobacteria</taxon>
        <taxon>Vibrionales</taxon>
        <taxon>Vibrionaceae</taxon>
        <taxon>Vibrio</taxon>
    </lineage>
</organism>
<sequence length="193" mass="21418">MQNYQLVLASTSPFRQQILAKLKLPFVTAKPDCDETPLIGETPEHLLMRLAENKARSCFLADPSLVIGSDQVCVIDDQIIGKPLTTEKAVEQLLRQSGQAITFYTGLALFNNQTQQTQVLCDTFTVHFRTLSESMARRYVEAEQPLHCAGSFKSEGLGIALFERLEGDDPNSLIGLPLIKLIQLLENEGLNVI</sequence>
<proteinExistence type="inferred from homology"/>